<dbReference type="EC" id="4.3.3.6" evidence="1"/>
<dbReference type="EC" id="3.5.1.2" evidence="1"/>
<dbReference type="EMBL" id="CP000077">
    <property type="protein sequence ID" value="AAY80869.1"/>
    <property type="molecule type" value="Genomic_DNA"/>
</dbReference>
<dbReference type="RefSeq" id="WP_011278371.1">
    <property type="nucleotide sequence ID" value="NC_007181.1"/>
</dbReference>
<dbReference type="SMR" id="Q4J8L2"/>
<dbReference type="STRING" id="330779.Saci_1556"/>
<dbReference type="GeneID" id="14552049"/>
<dbReference type="GeneID" id="78441899"/>
<dbReference type="KEGG" id="sai:Saci_1556"/>
<dbReference type="PATRIC" id="fig|330779.12.peg.1496"/>
<dbReference type="eggNOG" id="arCOG00034">
    <property type="taxonomic scope" value="Archaea"/>
</dbReference>
<dbReference type="HOGENOM" id="CLU_069674_2_0_2"/>
<dbReference type="UniPathway" id="UPA00245"/>
<dbReference type="Proteomes" id="UP000001018">
    <property type="component" value="Chromosome"/>
</dbReference>
<dbReference type="GO" id="GO:0005829">
    <property type="term" value="C:cytosol"/>
    <property type="evidence" value="ECO:0007669"/>
    <property type="project" value="TreeGrafter"/>
</dbReference>
<dbReference type="GO" id="GO:1903600">
    <property type="term" value="C:glutaminase complex"/>
    <property type="evidence" value="ECO:0007669"/>
    <property type="project" value="TreeGrafter"/>
</dbReference>
<dbReference type="GO" id="GO:0004359">
    <property type="term" value="F:glutaminase activity"/>
    <property type="evidence" value="ECO:0007669"/>
    <property type="project" value="UniProtKB-UniRule"/>
</dbReference>
<dbReference type="GO" id="GO:0036381">
    <property type="term" value="F:pyridoxal 5'-phosphate synthase (glutamine hydrolysing) activity"/>
    <property type="evidence" value="ECO:0007669"/>
    <property type="project" value="UniProtKB-UniRule"/>
</dbReference>
<dbReference type="GO" id="GO:0006543">
    <property type="term" value="P:glutamine catabolic process"/>
    <property type="evidence" value="ECO:0007669"/>
    <property type="project" value="UniProtKB-UniRule"/>
</dbReference>
<dbReference type="GO" id="GO:0042823">
    <property type="term" value="P:pyridoxal phosphate biosynthetic process"/>
    <property type="evidence" value="ECO:0007669"/>
    <property type="project" value="UniProtKB-UniRule"/>
</dbReference>
<dbReference type="GO" id="GO:0008614">
    <property type="term" value="P:pyridoxine metabolic process"/>
    <property type="evidence" value="ECO:0007669"/>
    <property type="project" value="TreeGrafter"/>
</dbReference>
<dbReference type="CDD" id="cd01749">
    <property type="entry name" value="GATase1_PB"/>
    <property type="match status" value="1"/>
</dbReference>
<dbReference type="FunFam" id="3.40.50.880:FF:000041">
    <property type="entry name" value="Glutamine amidotransferase subunit pdxT, putative"/>
    <property type="match status" value="1"/>
</dbReference>
<dbReference type="Gene3D" id="3.40.50.880">
    <property type="match status" value="1"/>
</dbReference>
<dbReference type="HAMAP" id="MF_01615">
    <property type="entry name" value="PdxT"/>
    <property type="match status" value="1"/>
</dbReference>
<dbReference type="InterPro" id="IPR029062">
    <property type="entry name" value="Class_I_gatase-like"/>
</dbReference>
<dbReference type="InterPro" id="IPR002161">
    <property type="entry name" value="PdxT/SNO"/>
</dbReference>
<dbReference type="InterPro" id="IPR021196">
    <property type="entry name" value="PdxT/SNO_CS"/>
</dbReference>
<dbReference type="NCBIfam" id="TIGR03800">
    <property type="entry name" value="PLP_synth_Pdx2"/>
    <property type="match status" value="1"/>
</dbReference>
<dbReference type="PANTHER" id="PTHR31559">
    <property type="entry name" value="PYRIDOXAL 5'-PHOSPHATE SYNTHASE SUBUNIT SNO"/>
    <property type="match status" value="1"/>
</dbReference>
<dbReference type="PANTHER" id="PTHR31559:SF0">
    <property type="entry name" value="PYRIDOXAL 5'-PHOSPHATE SYNTHASE SUBUNIT SNO1-RELATED"/>
    <property type="match status" value="1"/>
</dbReference>
<dbReference type="Pfam" id="PF01174">
    <property type="entry name" value="SNO"/>
    <property type="match status" value="1"/>
</dbReference>
<dbReference type="PIRSF" id="PIRSF005639">
    <property type="entry name" value="Glut_amidoT_SNO"/>
    <property type="match status" value="1"/>
</dbReference>
<dbReference type="SUPFAM" id="SSF52317">
    <property type="entry name" value="Class I glutamine amidotransferase-like"/>
    <property type="match status" value="1"/>
</dbReference>
<dbReference type="PROSITE" id="PS01236">
    <property type="entry name" value="PDXT_SNO_1"/>
    <property type="match status" value="1"/>
</dbReference>
<dbReference type="PROSITE" id="PS51130">
    <property type="entry name" value="PDXT_SNO_2"/>
    <property type="match status" value="1"/>
</dbReference>
<sequence>MKVGVIAYQGSFEEHAIQLKRAMSKLNLTGEVIAVKKPKDVDLIDGVVIPGGESTTIGIIAEKLGVLDEIKAKINAGLPVLGTCAGAIMLAKDVSDAKVGKKSQPLIGTMDIQVVRNYYGRQRESFETDLDFRVIGGGKARVVFIRAPIIKRTWNDATALISFENGIVMAEQKNMLATTFHPELSESTIVHEYFLSKIKK</sequence>
<name>PDXT_SULAC</name>
<comment type="function">
    <text evidence="1">Catalyzes the hydrolysis of glutamine to glutamate and ammonia as part of the biosynthesis of pyridoxal 5'-phosphate. The resulting ammonia molecule is channeled to the active site of PdxS.</text>
</comment>
<comment type="catalytic activity">
    <reaction evidence="1">
        <text>aldehydo-D-ribose 5-phosphate + D-glyceraldehyde 3-phosphate + L-glutamine = pyridoxal 5'-phosphate + L-glutamate + phosphate + 3 H2O + H(+)</text>
        <dbReference type="Rhea" id="RHEA:31507"/>
        <dbReference type="ChEBI" id="CHEBI:15377"/>
        <dbReference type="ChEBI" id="CHEBI:15378"/>
        <dbReference type="ChEBI" id="CHEBI:29985"/>
        <dbReference type="ChEBI" id="CHEBI:43474"/>
        <dbReference type="ChEBI" id="CHEBI:58273"/>
        <dbReference type="ChEBI" id="CHEBI:58359"/>
        <dbReference type="ChEBI" id="CHEBI:59776"/>
        <dbReference type="ChEBI" id="CHEBI:597326"/>
        <dbReference type="EC" id="4.3.3.6"/>
    </reaction>
</comment>
<comment type="catalytic activity">
    <reaction evidence="1">
        <text>L-glutamine + H2O = L-glutamate + NH4(+)</text>
        <dbReference type="Rhea" id="RHEA:15889"/>
        <dbReference type="ChEBI" id="CHEBI:15377"/>
        <dbReference type="ChEBI" id="CHEBI:28938"/>
        <dbReference type="ChEBI" id="CHEBI:29985"/>
        <dbReference type="ChEBI" id="CHEBI:58359"/>
        <dbReference type="EC" id="3.5.1.2"/>
    </reaction>
</comment>
<comment type="pathway">
    <text evidence="1">Cofactor biosynthesis; pyridoxal 5'-phosphate biosynthesis.</text>
</comment>
<comment type="subunit">
    <text evidence="1">In the presence of PdxS, forms a dodecamer of heterodimers. Only shows activity in the heterodimer.</text>
</comment>
<comment type="similarity">
    <text evidence="1">Belongs to the glutaminase PdxT/SNO family.</text>
</comment>
<gene>
    <name evidence="1" type="primary">pdxT</name>
    <name type="ordered locus">Saci_1556</name>
</gene>
<reference key="1">
    <citation type="journal article" date="2005" name="J. Bacteriol.">
        <title>The genome of Sulfolobus acidocaldarius, a model organism of the Crenarchaeota.</title>
        <authorList>
            <person name="Chen L."/>
            <person name="Bruegger K."/>
            <person name="Skovgaard M."/>
            <person name="Redder P."/>
            <person name="She Q."/>
            <person name="Torarinsson E."/>
            <person name="Greve B."/>
            <person name="Awayez M."/>
            <person name="Zibat A."/>
            <person name="Klenk H.-P."/>
            <person name="Garrett R.A."/>
        </authorList>
    </citation>
    <scope>NUCLEOTIDE SEQUENCE [LARGE SCALE GENOMIC DNA]</scope>
    <source>
        <strain>ATCC 33909 / DSM 639 / JCM 8929 / NBRC 15157 / NCIMB 11770</strain>
    </source>
</reference>
<protein>
    <recommendedName>
        <fullName evidence="1">Pyridoxal 5'-phosphate synthase subunit PdxT</fullName>
        <ecNumber evidence="1">4.3.3.6</ecNumber>
    </recommendedName>
    <alternativeName>
        <fullName evidence="1">Pdx2</fullName>
    </alternativeName>
    <alternativeName>
        <fullName evidence="1">Pyridoxal 5'-phosphate synthase glutaminase subunit</fullName>
        <ecNumber evidence="1">3.5.1.2</ecNumber>
    </alternativeName>
</protein>
<keyword id="KW-0315">Glutamine amidotransferase</keyword>
<keyword id="KW-0378">Hydrolase</keyword>
<keyword id="KW-0456">Lyase</keyword>
<keyword id="KW-0663">Pyridoxal phosphate</keyword>
<keyword id="KW-1185">Reference proteome</keyword>
<evidence type="ECO:0000255" key="1">
    <source>
        <dbReference type="HAMAP-Rule" id="MF_01615"/>
    </source>
</evidence>
<proteinExistence type="inferred from homology"/>
<feature type="chain" id="PRO_0000135691" description="Pyridoxal 5'-phosphate synthase subunit PdxT">
    <location>
        <begin position="1"/>
        <end position="200"/>
    </location>
</feature>
<feature type="active site" description="Nucleophile" evidence="1">
    <location>
        <position position="84"/>
    </location>
</feature>
<feature type="active site" description="Charge relay system" evidence="1">
    <location>
        <position position="181"/>
    </location>
</feature>
<feature type="active site" description="Charge relay system" evidence="1">
    <location>
        <position position="183"/>
    </location>
</feature>
<feature type="binding site" evidence="1">
    <location>
        <begin position="52"/>
        <end position="54"/>
    </location>
    <ligand>
        <name>L-glutamine</name>
        <dbReference type="ChEBI" id="CHEBI:58359"/>
    </ligand>
</feature>
<feature type="binding site" evidence="1">
    <location>
        <position position="116"/>
    </location>
    <ligand>
        <name>L-glutamine</name>
        <dbReference type="ChEBI" id="CHEBI:58359"/>
    </ligand>
</feature>
<feature type="binding site" evidence="1">
    <location>
        <begin position="145"/>
        <end position="146"/>
    </location>
    <ligand>
        <name>L-glutamine</name>
        <dbReference type="ChEBI" id="CHEBI:58359"/>
    </ligand>
</feature>
<organism>
    <name type="scientific">Sulfolobus acidocaldarius (strain ATCC 33909 / DSM 639 / JCM 8929 / NBRC 15157 / NCIMB 11770)</name>
    <dbReference type="NCBI Taxonomy" id="330779"/>
    <lineage>
        <taxon>Archaea</taxon>
        <taxon>Thermoproteota</taxon>
        <taxon>Thermoprotei</taxon>
        <taxon>Sulfolobales</taxon>
        <taxon>Sulfolobaceae</taxon>
        <taxon>Sulfolobus</taxon>
    </lineage>
</organism>
<accession>Q4J8L2</accession>